<reference key="1">
    <citation type="journal article" date="2004" name="Genome Res.">
        <title>The status, quality, and expansion of the NIH full-length cDNA project: the Mammalian Gene Collection (MGC).</title>
        <authorList>
            <consortium name="The MGC Project Team"/>
        </authorList>
    </citation>
    <scope>NUCLEOTIDE SEQUENCE [LARGE SCALE MRNA]</scope>
    <source>
        <strain>C57BL/6J</strain>
        <tissue>Brain</tissue>
    </source>
</reference>
<reference key="2">
    <citation type="journal article" date="2004" name="J. Comp. Neurol.">
        <title>Diversity of glycine receptors in the mouse retina: localization of the alpha2 subunit.</title>
        <authorList>
            <person name="Haverkamp S."/>
            <person name="Mueller U."/>
            <person name="Zeilhofer H.U."/>
            <person name="Harvey R.J."/>
            <person name="Waessle H."/>
        </authorList>
    </citation>
    <scope>SUBCELLULAR LOCATION</scope>
    <scope>TISSUE SPECIFICITY</scope>
</reference>
<reference key="3">
    <citation type="journal article" date="2006" name="Mol. Cell. Biol.">
        <title>Characterization of mice with targeted deletion of glycine receptor alpha 2.</title>
        <authorList>
            <person name="Young-Pearse T.L."/>
            <person name="Ivic L."/>
            <person name="Kriegstein A.R."/>
            <person name="Cepko C.L."/>
        </authorList>
    </citation>
    <scope>DISRUPTION PHENOTYPE</scope>
    <scope>TISSUE SPECIFICITY</scope>
</reference>
<reference key="4">
    <citation type="journal article" date="2012" name="Behav. Brain Res.">
        <title>Prolonged zymosan-induced inflammatory pain hypersensitivity in mice lacking glycine receptor alpha2.</title>
        <authorList>
            <person name="Kallenborn-Gerhardt W."/>
            <person name="Lu R."/>
            <person name="Lorenz J."/>
            <person name="Gao W."/>
            <person name="Weiland J."/>
            <person name="Del Turco D."/>
            <person name="Deller T."/>
            <person name="Laube B."/>
            <person name="Betz H."/>
            <person name="Geisslinger G."/>
            <person name="Schmidtko A."/>
        </authorList>
    </citation>
    <scope>DISRUPTION PHENOTYPE</scope>
    <scope>TISSUE SPECIFICITY</scope>
</reference>
<reference key="5">
    <citation type="journal article" date="2016" name="Mol. Psychiatry">
        <title>Genetic and functional analyses demonstrate a role for abnormal glycinergic signaling in autism.</title>
        <authorList>
            <person name="Pilorge M."/>
            <person name="Fassier C."/>
            <person name="Le Corronc H."/>
            <person name="Potey A."/>
            <person name="Bai J."/>
            <person name="De Gois S."/>
            <person name="Delaby E."/>
            <person name="Assouline B."/>
            <person name="Guinchat V."/>
            <person name="Devillard F."/>
            <person name="Delorme R."/>
            <person name="Nygren G."/>
            <person name="Raastam M."/>
            <person name="Meier J.C."/>
            <person name="Otani S."/>
            <person name="Cheval H."/>
            <person name="James V.M."/>
            <person name="Topf M."/>
            <person name="Dear T.N."/>
            <person name="Gillberg C."/>
            <person name="Leboyer M."/>
            <person name="Giros B."/>
            <person name="Gautron S."/>
            <person name="Hazan J."/>
            <person name="Harvey R.J."/>
            <person name="Legendre P."/>
            <person name="Betancur C."/>
        </authorList>
    </citation>
    <scope>DISRUPTION PHENOTYPE</scope>
    <scope>FUNCTION</scope>
</reference>
<name>GLRA2_MOUSE</name>
<dbReference type="EMBL" id="BC056342">
    <property type="protein sequence ID" value="AAH56342.1"/>
    <property type="molecule type" value="mRNA"/>
</dbReference>
<dbReference type="EMBL" id="BC068987">
    <property type="protein sequence ID" value="AAH68987.1"/>
    <property type="molecule type" value="mRNA"/>
</dbReference>
<dbReference type="CCDS" id="CCDS41206.1"/>
<dbReference type="RefSeq" id="NP_001344028.1">
    <property type="nucleotide sequence ID" value="NM_001357099.1"/>
</dbReference>
<dbReference type="RefSeq" id="NP_906272.1">
    <property type="nucleotide sequence ID" value="NM_183427.5"/>
</dbReference>
<dbReference type="RefSeq" id="XP_006528897.1">
    <property type="nucleotide sequence ID" value="XM_006528834.1"/>
</dbReference>
<dbReference type="RefSeq" id="XP_006528898.1">
    <property type="nucleotide sequence ID" value="XM_006528835.3"/>
</dbReference>
<dbReference type="SMR" id="Q7TNC8"/>
<dbReference type="BioGRID" id="231850">
    <property type="interactions" value="1"/>
</dbReference>
<dbReference type="FunCoup" id="Q7TNC8">
    <property type="interactions" value="827"/>
</dbReference>
<dbReference type="STRING" id="10090.ENSMUSP00000060827"/>
<dbReference type="GlyCosmos" id="Q7TNC8">
    <property type="glycosylation" value="2 sites, No reported glycans"/>
</dbReference>
<dbReference type="GlyGen" id="Q7TNC8">
    <property type="glycosylation" value="3 sites, 3 N-linked glycans (3 sites)"/>
</dbReference>
<dbReference type="iPTMnet" id="Q7TNC8"/>
<dbReference type="PhosphoSitePlus" id="Q7TNC8"/>
<dbReference type="SwissPalm" id="Q7TNC8"/>
<dbReference type="PaxDb" id="10090-ENSMUSP00000060827"/>
<dbReference type="ProteomicsDB" id="270997"/>
<dbReference type="Antibodypedia" id="54675">
    <property type="antibodies" value="55 antibodies from 18 providers"/>
</dbReference>
<dbReference type="DNASU" id="237213"/>
<dbReference type="Ensembl" id="ENSMUST00000058787.9">
    <property type="protein sequence ID" value="ENSMUSP00000060827.9"/>
    <property type="gene ID" value="ENSMUSG00000018589.9"/>
</dbReference>
<dbReference type="GeneID" id="237213"/>
<dbReference type="KEGG" id="mmu:237213"/>
<dbReference type="UCSC" id="uc009uwb.1">
    <property type="organism name" value="mouse"/>
</dbReference>
<dbReference type="AGR" id="MGI:95748"/>
<dbReference type="CTD" id="2742"/>
<dbReference type="MGI" id="MGI:95748">
    <property type="gene designation" value="Glra2"/>
</dbReference>
<dbReference type="VEuPathDB" id="HostDB:ENSMUSG00000018589"/>
<dbReference type="eggNOG" id="KOG3644">
    <property type="taxonomic scope" value="Eukaryota"/>
</dbReference>
<dbReference type="GeneTree" id="ENSGT00940000158730"/>
<dbReference type="HOGENOM" id="CLU_010920_1_4_1"/>
<dbReference type="InParanoid" id="Q7TNC8"/>
<dbReference type="OMA" id="GYACFNV"/>
<dbReference type="OrthoDB" id="407674at2759"/>
<dbReference type="PhylomeDB" id="Q7TNC8"/>
<dbReference type="TreeFam" id="TF315453"/>
<dbReference type="Reactome" id="R-MMU-112314">
    <property type="pathway name" value="Neurotransmitter receptors and postsynaptic signal transmission"/>
</dbReference>
<dbReference type="BioGRID-ORCS" id="237213">
    <property type="hits" value="2 hits in 77 CRISPR screens"/>
</dbReference>
<dbReference type="PRO" id="PR:Q7TNC8"/>
<dbReference type="Proteomes" id="UP000000589">
    <property type="component" value="Chromosome X"/>
</dbReference>
<dbReference type="RNAct" id="Q7TNC8">
    <property type="molecule type" value="protein"/>
</dbReference>
<dbReference type="Bgee" id="ENSMUSG00000018589">
    <property type="expression patterns" value="Expressed in cortical plate and 60 other cell types or tissues"/>
</dbReference>
<dbReference type="ExpressionAtlas" id="Q7TNC8">
    <property type="expression patterns" value="baseline and differential"/>
</dbReference>
<dbReference type="GO" id="GO:0042995">
    <property type="term" value="C:cell projection"/>
    <property type="evidence" value="ECO:0007669"/>
    <property type="project" value="UniProtKB-SubCell"/>
</dbReference>
<dbReference type="GO" id="GO:0034707">
    <property type="term" value="C:chloride channel complex"/>
    <property type="evidence" value="ECO:0007669"/>
    <property type="project" value="UniProtKB-KW"/>
</dbReference>
<dbReference type="GO" id="GO:0098982">
    <property type="term" value="C:GABA-ergic synapse"/>
    <property type="evidence" value="ECO:0000314"/>
    <property type="project" value="SynGO"/>
</dbReference>
<dbReference type="GO" id="GO:0098690">
    <property type="term" value="C:glycinergic synapse"/>
    <property type="evidence" value="ECO:0000314"/>
    <property type="project" value="SynGO"/>
</dbReference>
<dbReference type="GO" id="GO:0043231">
    <property type="term" value="C:intracellular membrane-bounded organelle"/>
    <property type="evidence" value="ECO:0007669"/>
    <property type="project" value="Ensembl"/>
</dbReference>
<dbReference type="GO" id="GO:0099634">
    <property type="term" value="C:postsynaptic specialization membrane"/>
    <property type="evidence" value="ECO:0000314"/>
    <property type="project" value="SynGO"/>
</dbReference>
<dbReference type="GO" id="GO:0016934">
    <property type="term" value="F:extracellularly glycine-gated chloride channel activity"/>
    <property type="evidence" value="ECO:0007669"/>
    <property type="project" value="Ensembl"/>
</dbReference>
<dbReference type="GO" id="GO:0016594">
    <property type="term" value="F:glycine binding"/>
    <property type="evidence" value="ECO:0007669"/>
    <property type="project" value="Ensembl"/>
</dbReference>
<dbReference type="GO" id="GO:0022852">
    <property type="term" value="F:glycine-gated chloride ion channel activity"/>
    <property type="evidence" value="ECO:0007669"/>
    <property type="project" value="Ensembl"/>
</dbReference>
<dbReference type="GO" id="GO:0046872">
    <property type="term" value="F:metal ion binding"/>
    <property type="evidence" value="ECO:0007669"/>
    <property type="project" value="UniProtKB-KW"/>
</dbReference>
<dbReference type="GO" id="GO:0004888">
    <property type="term" value="F:transmembrane signaling receptor activity"/>
    <property type="evidence" value="ECO:0007669"/>
    <property type="project" value="InterPro"/>
</dbReference>
<dbReference type="GO" id="GO:1904315">
    <property type="term" value="F:transmitter-gated monoatomic ion channel activity involved in regulation of postsynaptic membrane potential"/>
    <property type="evidence" value="ECO:0000314"/>
    <property type="project" value="SynGO"/>
</dbReference>
<dbReference type="GO" id="GO:0071230">
    <property type="term" value="P:cellular response to amino acid stimulus"/>
    <property type="evidence" value="ECO:0007669"/>
    <property type="project" value="Ensembl"/>
</dbReference>
<dbReference type="GO" id="GO:0071361">
    <property type="term" value="P:cellular response to ethanol"/>
    <property type="evidence" value="ECO:0007669"/>
    <property type="project" value="Ensembl"/>
</dbReference>
<dbReference type="GO" id="GO:0071294">
    <property type="term" value="P:cellular response to zinc ion"/>
    <property type="evidence" value="ECO:0007669"/>
    <property type="project" value="Ensembl"/>
</dbReference>
<dbReference type="GO" id="GO:0050804">
    <property type="term" value="P:modulation of chemical synaptic transmission"/>
    <property type="evidence" value="ECO:0000314"/>
    <property type="project" value="SynGO"/>
</dbReference>
<dbReference type="GO" id="GO:0007218">
    <property type="term" value="P:neuropeptide signaling pathway"/>
    <property type="evidence" value="ECO:0007669"/>
    <property type="project" value="Ensembl"/>
</dbReference>
<dbReference type="CDD" id="cd19009">
    <property type="entry name" value="LGIC_ECD_GlyR_alpha"/>
    <property type="match status" value="1"/>
</dbReference>
<dbReference type="CDD" id="cd19060">
    <property type="entry name" value="LGIC_TM_GlyR_alpha"/>
    <property type="match status" value="1"/>
</dbReference>
<dbReference type="FunFam" id="2.70.170.10:FF:000002">
    <property type="entry name" value="Glycine receptor alpha 1 subunit"/>
    <property type="match status" value="1"/>
</dbReference>
<dbReference type="FunFam" id="1.20.58.390:FF:000003">
    <property type="entry name" value="Glycine receptor alpha 2 subunit"/>
    <property type="match status" value="1"/>
</dbReference>
<dbReference type="Gene3D" id="2.70.170.10">
    <property type="entry name" value="Neurotransmitter-gated ion-channel ligand-binding domain"/>
    <property type="match status" value="1"/>
</dbReference>
<dbReference type="Gene3D" id="1.20.58.390">
    <property type="entry name" value="Neurotransmitter-gated ion-channel transmembrane domain"/>
    <property type="match status" value="1"/>
</dbReference>
<dbReference type="InterPro" id="IPR006028">
    <property type="entry name" value="GABAA/Glycine_rcpt"/>
</dbReference>
<dbReference type="InterPro" id="IPR008127">
    <property type="entry name" value="Glycine_rcpt_A"/>
</dbReference>
<dbReference type="InterPro" id="IPR008129">
    <property type="entry name" value="Glycine_rcpt_A2"/>
</dbReference>
<dbReference type="InterPro" id="IPR006202">
    <property type="entry name" value="Neur_chan_lig-bd"/>
</dbReference>
<dbReference type="InterPro" id="IPR036734">
    <property type="entry name" value="Neur_chan_lig-bd_sf"/>
</dbReference>
<dbReference type="InterPro" id="IPR006201">
    <property type="entry name" value="Neur_channel"/>
</dbReference>
<dbReference type="InterPro" id="IPR036719">
    <property type="entry name" value="Neuro-gated_channel_TM_sf"/>
</dbReference>
<dbReference type="InterPro" id="IPR038050">
    <property type="entry name" value="Neuro_actylchol_rec"/>
</dbReference>
<dbReference type="InterPro" id="IPR006029">
    <property type="entry name" value="Neurotrans-gated_channel_TM"/>
</dbReference>
<dbReference type="InterPro" id="IPR018000">
    <property type="entry name" value="Neurotransmitter_ion_chnl_CS"/>
</dbReference>
<dbReference type="NCBIfam" id="TIGR00860">
    <property type="entry name" value="LIC"/>
    <property type="match status" value="1"/>
</dbReference>
<dbReference type="PANTHER" id="PTHR18945">
    <property type="entry name" value="NEUROTRANSMITTER GATED ION CHANNEL"/>
    <property type="match status" value="1"/>
</dbReference>
<dbReference type="Pfam" id="PF02931">
    <property type="entry name" value="Neur_chan_LBD"/>
    <property type="match status" value="1"/>
</dbReference>
<dbReference type="Pfam" id="PF02932">
    <property type="entry name" value="Neur_chan_memb"/>
    <property type="match status" value="1"/>
</dbReference>
<dbReference type="PRINTS" id="PR00253">
    <property type="entry name" value="GABAARECEPTR"/>
</dbReference>
<dbReference type="PRINTS" id="PR01673">
    <property type="entry name" value="GLYRALPHA"/>
</dbReference>
<dbReference type="PRINTS" id="PR01675">
    <property type="entry name" value="GLYRALPHA2"/>
</dbReference>
<dbReference type="PRINTS" id="PR00252">
    <property type="entry name" value="NRIONCHANNEL"/>
</dbReference>
<dbReference type="SUPFAM" id="SSF90112">
    <property type="entry name" value="Neurotransmitter-gated ion-channel transmembrane pore"/>
    <property type="match status" value="1"/>
</dbReference>
<dbReference type="SUPFAM" id="SSF63712">
    <property type="entry name" value="Nicotinic receptor ligand binding domain-like"/>
    <property type="match status" value="1"/>
</dbReference>
<dbReference type="PROSITE" id="PS00236">
    <property type="entry name" value="NEUROTR_ION_CHANNEL"/>
    <property type="match status" value="1"/>
</dbReference>
<feature type="signal peptide" evidence="3">
    <location>
        <begin position="1"/>
        <end position="27"/>
    </location>
</feature>
<feature type="chain" id="PRO_0000000417" description="Glycine receptor subunit alpha-2">
    <location>
        <begin position="28"/>
        <end position="452"/>
    </location>
</feature>
<feature type="topological domain" description="Extracellular" evidence="1">
    <location>
        <begin position="28"/>
        <end position="256"/>
    </location>
</feature>
<feature type="transmembrane region" description="Helical; Name=1" evidence="1">
    <location>
        <begin position="257"/>
        <end position="278"/>
    </location>
</feature>
<feature type="topological domain" description="Cytoplasmic" evidence="1">
    <location>
        <begin position="279"/>
        <end position="283"/>
    </location>
</feature>
<feature type="transmembrane region" description="Helical; Name=2" evidence="1">
    <location>
        <begin position="284"/>
        <end position="304"/>
    </location>
</feature>
<feature type="topological domain" description="Extracellular" evidence="1">
    <location>
        <begin position="305"/>
        <end position="315"/>
    </location>
</feature>
<feature type="transmembrane region" description="Helical; Name=3" evidence="1">
    <location>
        <begin position="316"/>
        <end position="336"/>
    </location>
</feature>
<feature type="topological domain" description="Cytoplasmic" evidence="1">
    <location>
        <begin position="337"/>
        <end position="420"/>
    </location>
</feature>
<feature type="transmembrane region" description="Helical; Name=4" evidence="1">
    <location>
        <begin position="421"/>
        <end position="441"/>
    </location>
</feature>
<feature type="topological domain" description="Extracellular" evidence="1">
    <location>
        <begin position="442"/>
        <end position="452"/>
    </location>
</feature>
<feature type="binding site" description="in one chain" evidence="2">
    <location>
        <position position="99"/>
    </location>
    <ligand>
        <name>glycine</name>
        <dbReference type="ChEBI" id="CHEBI:57305"/>
        <label>1</label>
        <note>agonist; ligand shared between two adjacent GLRA2 subunits</note>
    </ligand>
</feature>
<feature type="binding site" evidence="2">
    <location>
        <position position="99"/>
    </location>
    <ligand>
        <name>glycine</name>
        <dbReference type="ChEBI" id="CHEBI:57305"/>
        <label>2</label>
        <note>agonist; ligand shared with an adjacent GLRB subunit</note>
    </ligand>
</feature>
<feature type="binding site" evidence="2">
    <location>
        <position position="99"/>
    </location>
    <ligand>
        <name>strychnine</name>
        <dbReference type="ChEBI" id="CHEBI:90700"/>
        <note>antagonist</note>
    </ligand>
</feature>
<feature type="binding site" description="in one chain" evidence="2">
    <location>
        <position position="163"/>
    </location>
    <ligand>
        <name>glycine</name>
        <dbReference type="ChEBI" id="CHEBI:57305"/>
        <label>1</label>
        <note>agonist; ligand shared between two adjacent GLRA2 subunits</note>
    </ligand>
</feature>
<feature type="binding site" evidence="2">
    <location>
        <position position="163"/>
    </location>
    <ligand>
        <name>glycine</name>
        <dbReference type="ChEBI" id="CHEBI:57305"/>
        <label>2</label>
        <note>agonist; ligand shared with an adjacent GLRB subunit</note>
    </ligand>
</feature>
<feature type="binding site" evidence="1">
    <location>
        <position position="226"/>
    </location>
    <ligand>
        <name>Zn(2+)</name>
        <dbReference type="ChEBI" id="CHEBI:29105"/>
    </ligand>
</feature>
<feature type="binding site" evidence="1">
    <location>
        <position position="228"/>
    </location>
    <ligand>
        <name>Zn(2+)</name>
        <dbReference type="ChEBI" id="CHEBI:29105"/>
    </ligand>
</feature>
<feature type="binding site" description="in other chain" evidence="2">
    <location>
        <position position="238"/>
    </location>
    <ligand>
        <name>glycine</name>
        <dbReference type="ChEBI" id="CHEBI:57305"/>
        <label>1</label>
        <note>agonist; ligand shared between two adjacent GLRA2 subunits</note>
    </ligand>
</feature>
<feature type="binding site" evidence="2">
    <location>
        <position position="238"/>
    </location>
    <ligand>
        <name>glycine</name>
        <dbReference type="ChEBI" id="CHEBI:57305"/>
        <label>3</label>
        <note>agonist; ligand shared with an adjacent GLRB subunit</note>
    </ligand>
</feature>
<feature type="binding site" evidence="1">
    <location>
        <position position="249"/>
    </location>
    <ligand>
        <name>Zn(2+)</name>
        <dbReference type="ChEBI" id="CHEBI:29105"/>
    </ligand>
</feature>
<feature type="site" description="Important for obstruction of the ion pore in the closed conformation" evidence="1">
    <location>
        <position position="295"/>
    </location>
</feature>
<feature type="glycosylation site" description="N-linked (GlcNAc...) asparagine" evidence="3">
    <location>
        <position position="72"/>
    </location>
</feature>
<feature type="glycosylation site" description="N-linked (GlcNAc...) asparagine" evidence="3">
    <location>
        <position position="103"/>
    </location>
</feature>
<feature type="disulfide bond" evidence="1">
    <location>
        <begin position="172"/>
        <end position="186"/>
    </location>
</feature>
<feature type="disulfide bond" evidence="1">
    <location>
        <begin position="232"/>
        <end position="243"/>
    </location>
</feature>
<comment type="function">
    <text evidence="2 7">Subunit of heteromeric glycine-gated chloride channels (By similarity). Plays a role in synaptic plasticity (PubMed:26370147). Contributes to the generation of inhibitory postsynaptic currents, and is involved in the down-regulation of neuronal excitability. Plays a role in cellular responses to ethanol.</text>
</comment>
<comment type="catalytic activity">
    <reaction evidence="2">
        <text>chloride(in) = chloride(out)</text>
        <dbReference type="Rhea" id="RHEA:29823"/>
        <dbReference type="ChEBI" id="CHEBI:17996"/>
    </reaction>
</comment>
<comment type="activity regulation">
    <text evidence="2">Channel opening is triggered by extracellular glycine. Channel opening is also triggered by taurine and beta-alanine. Inhibited by strychnine. Inhibited by picrotoxin.</text>
</comment>
<comment type="subunit">
    <text evidence="2">Interacts with GLRB. Heteropentamer composed of GLRA2 and GLRB; functional GLRB-GLRA2 heteropentamers contain four GLRA2 subunits and one GLRB subunit, although alternative subunit composition cannot be excluded. Homopentamer (in vitro). Both homopentamers and heteropentamers form functional ion channels, but their characteristics are subtly different.</text>
</comment>
<comment type="subcellular location">
    <subcellularLocation>
        <location evidence="9">Postsynaptic cell membrane</location>
        <topology evidence="8">Multi-pass membrane protein</topology>
    </subcellularLocation>
    <subcellularLocation>
        <location evidence="4">Synapse</location>
    </subcellularLocation>
    <subcellularLocation>
        <location>Cell membrane</location>
        <topology evidence="1">Multi-pass membrane protein</topology>
    </subcellularLocation>
    <subcellularLocation>
        <location evidence="4">Cell projection</location>
    </subcellularLocation>
</comment>
<comment type="tissue specificity">
    <text evidence="4 5 6">Detected in the retina inner plexiform layer (at protein level) (PubMed:15329889). Detected in neonate retina. Detected in brain (PubMed:21924294). Detected in spinal cord, with higher levels in the dorsal horn (PubMed:16847326, PubMed:21924294).</text>
</comment>
<comment type="disruption phenotype">
    <text evidence="5 7">Loss of glycine-induced currents in cortical neurons from 17 dpc embryos. Still, mutant mice are born at the expected Mendelian rate, are healthy and fertile. No effect on glycine-induced currents in cortical neurons from seven day old mice (PubMed:16847326). Baseline nociception is not changed, but mutant mice show increased hyperalgesia in response to mechanical stimuli during later stages of inflammation caused by zymosan injection (PubMed:21924294). Knockout mice show impaired learnig, short- and long-term memory deficits, and impaired long-term potentiation in the prefrontal cortex. Locomotor activity, motor coordination, and social behavior are normal (PubMed:26370147).</text>
</comment>
<comment type="miscellaneous">
    <text evidence="2">The alpha subunit binds strychnine.</text>
</comment>
<comment type="similarity">
    <text evidence="8">Belongs to the ligand-gated ion channel (TC 1.A.9) family. Glycine receptor (TC 1.A.9.3) subfamily. GLRA2 sub-subfamily.</text>
</comment>
<protein>
    <recommendedName>
        <fullName evidence="9">Glycine receptor subunit alpha-2</fullName>
    </recommendedName>
</protein>
<proteinExistence type="evidence at protein level"/>
<accession>Q7TNC8</accession>
<organism>
    <name type="scientific">Mus musculus</name>
    <name type="common">Mouse</name>
    <dbReference type="NCBI Taxonomy" id="10090"/>
    <lineage>
        <taxon>Eukaryota</taxon>
        <taxon>Metazoa</taxon>
        <taxon>Chordata</taxon>
        <taxon>Craniata</taxon>
        <taxon>Vertebrata</taxon>
        <taxon>Euteleostomi</taxon>
        <taxon>Mammalia</taxon>
        <taxon>Eutheria</taxon>
        <taxon>Euarchontoglires</taxon>
        <taxon>Glires</taxon>
        <taxon>Rodentia</taxon>
        <taxon>Myomorpha</taxon>
        <taxon>Muroidea</taxon>
        <taxon>Muridae</taxon>
        <taxon>Murinae</taxon>
        <taxon>Mus</taxon>
        <taxon>Mus</taxon>
    </lineage>
</organism>
<sequence>MYRQLVNILTALFAFFLGTNHFREAFCKDHDSRSGKHPSQTLSPSDFLDKLMGRTSGYDARIRPNFKGPPVNVTCNIFINSFGSVTETTMDYRVNIFLRQQWNDSRLAYSEYPDDSLDLDPSMLDSIWKPDLFFANEKGANFHDVTTDNKLLRISKNGKVLYSIRLTLTLSCPMDLKNFPMDVQTCTMQLESFGYTMNDLIFEWLSDGPVQVAEGLTLPQFILKEEKELGYCTKHYNTGKFTCIEVKFHLERQMGYYLIQMYIPSLLIVILSWVSFWINMDAAPARVALGITTVLTMTTQSSGSRASLPKVSYVKAIDIWMAVCLLFVFAALLEYAAVNFVSRQHKEFLRLRRRQKRQNKEEDVTRESRFNFSGYGMGHCLQMKDGTAVKATPANPLPQPPKDADAIKKKFVDRAKRIDTISRAAFPLAFLIFNIFYWITYKIIRHEDVHKK</sequence>
<evidence type="ECO:0000250" key="1">
    <source>
        <dbReference type="UniProtKB" id="P23415"/>
    </source>
</evidence>
<evidence type="ECO:0000250" key="2">
    <source>
        <dbReference type="UniProtKB" id="P23416"/>
    </source>
</evidence>
<evidence type="ECO:0000255" key="3"/>
<evidence type="ECO:0000269" key="4">
    <source>
    </source>
</evidence>
<evidence type="ECO:0000269" key="5">
    <source>
    </source>
</evidence>
<evidence type="ECO:0000269" key="6">
    <source>
    </source>
</evidence>
<evidence type="ECO:0000269" key="7">
    <source>
    </source>
</evidence>
<evidence type="ECO:0000305" key="8"/>
<evidence type="ECO:0000305" key="9">
    <source>
    </source>
</evidence>
<evidence type="ECO:0000312" key="10">
    <source>
        <dbReference type="MGI" id="MGI:95748"/>
    </source>
</evidence>
<gene>
    <name evidence="10" type="primary">Glra2</name>
</gene>
<keyword id="KW-1003">Cell membrane</keyword>
<keyword id="KW-0966">Cell projection</keyword>
<keyword id="KW-0868">Chloride</keyword>
<keyword id="KW-0869">Chloride channel</keyword>
<keyword id="KW-1015">Disulfide bond</keyword>
<keyword id="KW-0325">Glycoprotein</keyword>
<keyword id="KW-0407">Ion channel</keyword>
<keyword id="KW-0406">Ion transport</keyword>
<keyword id="KW-1071">Ligand-gated ion channel</keyword>
<keyword id="KW-0472">Membrane</keyword>
<keyword id="KW-0479">Metal-binding</keyword>
<keyword id="KW-0628">Postsynaptic cell membrane</keyword>
<keyword id="KW-0675">Receptor</keyword>
<keyword id="KW-1185">Reference proteome</keyword>
<keyword id="KW-0732">Signal</keyword>
<keyword id="KW-0770">Synapse</keyword>
<keyword id="KW-0812">Transmembrane</keyword>
<keyword id="KW-1133">Transmembrane helix</keyword>
<keyword id="KW-0813">Transport</keyword>
<keyword id="KW-0862">Zinc</keyword>